<organism>
    <name type="scientific">Staphylococcus haemolyticus (strain JCSC1435)</name>
    <dbReference type="NCBI Taxonomy" id="279808"/>
    <lineage>
        <taxon>Bacteria</taxon>
        <taxon>Bacillati</taxon>
        <taxon>Bacillota</taxon>
        <taxon>Bacilli</taxon>
        <taxon>Bacillales</taxon>
        <taxon>Staphylococcaceae</taxon>
        <taxon>Staphylococcus</taxon>
    </lineage>
</organism>
<proteinExistence type="inferred from homology"/>
<feature type="chain" id="PRO_0000234782" description="Tyrosine--tRNA ligase">
    <location>
        <begin position="1"/>
        <end position="420"/>
    </location>
</feature>
<feature type="domain" description="S4 RNA-binding" evidence="1">
    <location>
        <begin position="353"/>
        <end position="420"/>
    </location>
</feature>
<feature type="short sequence motif" description="'HIGH' region">
    <location>
        <begin position="41"/>
        <end position="50"/>
    </location>
</feature>
<feature type="short sequence motif" description="'KMSKS' region">
    <location>
        <begin position="231"/>
        <end position="235"/>
    </location>
</feature>
<feature type="binding site" evidence="1">
    <location>
        <position position="36"/>
    </location>
    <ligand>
        <name>L-tyrosine</name>
        <dbReference type="ChEBI" id="CHEBI:58315"/>
    </ligand>
</feature>
<feature type="binding site" evidence="1">
    <location>
        <position position="170"/>
    </location>
    <ligand>
        <name>L-tyrosine</name>
        <dbReference type="ChEBI" id="CHEBI:58315"/>
    </ligand>
</feature>
<feature type="binding site" evidence="1">
    <location>
        <position position="174"/>
    </location>
    <ligand>
        <name>L-tyrosine</name>
        <dbReference type="ChEBI" id="CHEBI:58315"/>
    </ligand>
</feature>
<feature type="binding site" evidence="1">
    <location>
        <position position="234"/>
    </location>
    <ligand>
        <name>ATP</name>
        <dbReference type="ChEBI" id="CHEBI:30616"/>
    </ligand>
</feature>
<name>SYY_STAHJ</name>
<protein>
    <recommendedName>
        <fullName evidence="1">Tyrosine--tRNA ligase</fullName>
        <ecNumber evidence="1">6.1.1.1</ecNumber>
    </recommendedName>
    <alternativeName>
        <fullName evidence="1">Tyrosyl-tRNA synthetase</fullName>
        <shortName evidence="1">TyrRS</shortName>
    </alternativeName>
</protein>
<accession>Q4L774</accession>
<comment type="function">
    <text evidence="1">Catalyzes the attachment of tyrosine to tRNA(Tyr) in a two-step reaction: tyrosine is first activated by ATP to form Tyr-AMP and then transferred to the acceptor end of tRNA(Tyr).</text>
</comment>
<comment type="catalytic activity">
    <reaction evidence="1">
        <text>tRNA(Tyr) + L-tyrosine + ATP = L-tyrosyl-tRNA(Tyr) + AMP + diphosphate + H(+)</text>
        <dbReference type="Rhea" id="RHEA:10220"/>
        <dbReference type="Rhea" id="RHEA-COMP:9706"/>
        <dbReference type="Rhea" id="RHEA-COMP:9707"/>
        <dbReference type="ChEBI" id="CHEBI:15378"/>
        <dbReference type="ChEBI" id="CHEBI:30616"/>
        <dbReference type="ChEBI" id="CHEBI:33019"/>
        <dbReference type="ChEBI" id="CHEBI:58315"/>
        <dbReference type="ChEBI" id="CHEBI:78442"/>
        <dbReference type="ChEBI" id="CHEBI:78536"/>
        <dbReference type="ChEBI" id="CHEBI:456215"/>
        <dbReference type="EC" id="6.1.1.1"/>
    </reaction>
</comment>
<comment type="subunit">
    <text evidence="1">Homodimer.</text>
</comment>
<comment type="subcellular location">
    <subcellularLocation>
        <location evidence="1">Cytoplasm</location>
    </subcellularLocation>
</comment>
<comment type="similarity">
    <text evidence="1">Belongs to the class-I aminoacyl-tRNA synthetase family. TyrS type 1 subfamily.</text>
</comment>
<sequence length="420" mass="47657">MSNALIEELQWRGLIYQQTDESSIEELLNKEQISLYCGADPTADSLHIGHLLPFMTLRRFQEHGHRPIVLIGGGTGMIGDPSGKSEERILQTEDQVEANVEGISAQMHKLFEFGTDKGAILVNNKDWLSQISLISFLRDYGKHVGVNYMLGKDSIQSRLENGISYTEFTYTILQAIDFGHLNRELNCKLQVGGSDQWGNITSGIELMRRMYGQTEAYGLTIPLVTKSDGKKFGKSESGAVWLDADKTSPYEFYQFWINQSDDDVIKFLKYFTFLDKDEINRLEESKNQEPHLREAQKALAENVTEFIHGKEALDDAIRISKALFSGDLKSLSGKELKEGFKDVPQVELSTETSNIIDVLIETGIATSKRQAREDVNNGAIYINGERQQSVDYELSNEDKIDDEFTIIRRGKKKYFMVNYK</sequence>
<evidence type="ECO:0000255" key="1">
    <source>
        <dbReference type="HAMAP-Rule" id="MF_02006"/>
    </source>
</evidence>
<keyword id="KW-0030">Aminoacyl-tRNA synthetase</keyword>
<keyword id="KW-0067">ATP-binding</keyword>
<keyword id="KW-0963">Cytoplasm</keyword>
<keyword id="KW-0436">Ligase</keyword>
<keyword id="KW-0547">Nucleotide-binding</keyword>
<keyword id="KW-0648">Protein biosynthesis</keyword>
<keyword id="KW-0694">RNA-binding</keyword>
<dbReference type="EC" id="6.1.1.1" evidence="1"/>
<dbReference type="EMBL" id="AP006716">
    <property type="protein sequence ID" value="BAE04501.1"/>
    <property type="molecule type" value="Genomic_DNA"/>
</dbReference>
<dbReference type="RefSeq" id="WP_011275493.1">
    <property type="nucleotide sequence ID" value="NC_007168.1"/>
</dbReference>
<dbReference type="SMR" id="Q4L774"/>
<dbReference type="GeneID" id="93780603"/>
<dbReference type="KEGG" id="sha:SH1192"/>
<dbReference type="eggNOG" id="COG0162">
    <property type="taxonomic scope" value="Bacteria"/>
</dbReference>
<dbReference type="HOGENOM" id="CLU_024003_0_3_9"/>
<dbReference type="OrthoDB" id="9804243at2"/>
<dbReference type="Proteomes" id="UP000000543">
    <property type="component" value="Chromosome"/>
</dbReference>
<dbReference type="GO" id="GO:0005829">
    <property type="term" value="C:cytosol"/>
    <property type="evidence" value="ECO:0007669"/>
    <property type="project" value="TreeGrafter"/>
</dbReference>
<dbReference type="GO" id="GO:0005524">
    <property type="term" value="F:ATP binding"/>
    <property type="evidence" value="ECO:0007669"/>
    <property type="project" value="UniProtKB-UniRule"/>
</dbReference>
<dbReference type="GO" id="GO:0003723">
    <property type="term" value="F:RNA binding"/>
    <property type="evidence" value="ECO:0007669"/>
    <property type="project" value="UniProtKB-KW"/>
</dbReference>
<dbReference type="GO" id="GO:0004831">
    <property type="term" value="F:tyrosine-tRNA ligase activity"/>
    <property type="evidence" value="ECO:0007669"/>
    <property type="project" value="UniProtKB-UniRule"/>
</dbReference>
<dbReference type="GO" id="GO:0006437">
    <property type="term" value="P:tyrosyl-tRNA aminoacylation"/>
    <property type="evidence" value="ECO:0007669"/>
    <property type="project" value="UniProtKB-UniRule"/>
</dbReference>
<dbReference type="CDD" id="cd00165">
    <property type="entry name" value="S4"/>
    <property type="match status" value="1"/>
</dbReference>
<dbReference type="CDD" id="cd00395">
    <property type="entry name" value="Tyr_Trp_RS_core"/>
    <property type="match status" value="1"/>
</dbReference>
<dbReference type="FunFam" id="1.10.240.10:FF:000001">
    <property type="entry name" value="Tyrosine--tRNA ligase"/>
    <property type="match status" value="1"/>
</dbReference>
<dbReference type="FunFam" id="3.40.50.620:FF:000008">
    <property type="entry name" value="Tyrosine--tRNA ligase"/>
    <property type="match status" value="1"/>
</dbReference>
<dbReference type="Gene3D" id="3.40.50.620">
    <property type="entry name" value="HUPs"/>
    <property type="match status" value="1"/>
</dbReference>
<dbReference type="Gene3D" id="3.10.290.10">
    <property type="entry name" value="RNA-binding S4 domain"/>
    <property type="match status" value="1"/>
</dbReference>
<dbReference type="Gene3D" id="1.10.240.10">
    <property type="entry name" value="Tyrosyl-Transfer RNA Synthetase"/>
    <property type="match status" value="1"/>
</dbReference>
<dbReference type="HAMAP" id="MF_02006">
    <property type="entry name" value="Tyr_tRNA_synth_type1"/>
    <property type="match status" value="1"/>
</dbReference>
<dbReference type="InterPro" id="IPR001412">
    <property type="entry name" value="aa-tRNA-synth_I_CS"/>
</dbReference>
<dbReference type="InterPro" id="IPR002305">
    <property type="entry name" value="aa-tRNA-synth_Ic"/>
</dbReference>
<dbReference type="InterPro" id="IPR014729">
    <property type="entry name" value="Rossmann-like_a/b/a_fold"/>
</dbReference>
<dbReference type="InterPro" id="IPR002942">
    <property type="entry name" value="S4_RNA-bd"/>
</dbReference>
<dbReference type="InterPro" id="IPR036986">
    <property type="entry name" value="S4_RNA-bd_sf"/>
</dbReference>
<dbReference type="InterPro" id="IPR054608">
    <property type="entry name" value="SYY-like_C"/>
</dbReference>
<dbReference type="InterPro" id="IPR002307">
    <property type="entry name" value="Tyr-tRNA-ligase"/>
</dbReference>
<dbReference type="InterPro" id="IPR024088">
    <property type="entry name" value="Tyr-tRNA-ligase_bac-type"/>
</dbReference>
<dbReference type="InterPro" id="IPR024107">
    <property type="entry name" value="Tyr-tRNA-ligase_bac_1"/>
</dbReference>
<dbReference type="NCBIfam" id="TIGR00234">
    <property type="entry name" value="tyrS"/>
    <property type="match status" value="1"/>
</dbReference>
<dbReference type="PANTHER" id="PTHR11766:SF0">
    <property type="entry name" value="TYROSINE--TRNA LIGASE, MITOCHONDRIAL"/>
    <property type="match status" value="1"/>
</dbReference>
<dbReference type="PANTHER" id="PTHR11766">
    <property type="entry name" value="TYROSYL-TRNA SYNTHETASE"/>
    <property type="match status" value="1"/>
</dbReference>
<dbReference type="Pfam" id="PF22421">
    <property type="entry name" value="SYY_C-terminal"/>
    <property type="match status" value="1"/>
</dbReference>
<dbReference type="Pfam" id="PF00579">
    <property type="entry name" value="tRNA-synt_1b"/>
    <property type="match status" value="1"/>
</dbReference>
<dbReference type="PRINTS" id="PR01040">
    <property type="entry name" value="TRNASYNTHTYR"/>
</dbReference>
<dbReference type="SMART" id="SM00363">
    <property type="entry name" value="S4"/>
    <property type="match status" value="1"/>
</dbReference>
<dbReference type="SUPFAM" id="SSF55174">
    <property type="entry name" value="Alpha-L RNA-binding motif"/>
    <property type="match status" value="1"/>
</dbReference>
<dbReference type="SUPFAM" id="SSF52374">
    <property type="entry name" value="Nucleotidylyl transferase"/>
    <property type="match status" value="1"/>
</dbReference>
<dbReference type="PROSITE" id="PS00178">
    <property type="entry name" value="AA_TRNA_LIGASE_I"/>
    <property type="match status" value="1"/>
</dbReference>
<dbReference type="PROSITE" id="PS50889">
    <property type="entry name" value="S4"/>
    <property type="match status" value="1"/>
</dbReference>
<gene>
    <name evidence="1" type="primary">tyrS</name>
    <name type="ordered locus">SH1192</name>
</gene>
<reference key="1">
    <citation type="journal article" date="2005" name="J. Bacteriol.">
        <title>Whole-genome sequencing of Staphylococcus haemolyticus uncovers the extreme plasticity of its genome and the evolution of human-colonizing staphylococcal species.</title>
        <authorList>
            <person name="Takeuchi F."/>
            <person name="Watanabe S."/>
            <person name="Baba T."/>
            <person name="Yuzawa H."/>
            <person name="Ito T."/>
            <person name="Morimoto Y."/>
            <person name="Kuroda M."/>
            <person name="Cui L."/>
            <person name="Takahashi M."/>
            <person name="Ankai A."/>
            <person name="Baba S."/>
            <person name="Fukui S."/>
            <person name="Lee J.C."/>
            <person name="Hiramatsu K."/>
        </authorList>
    </citation>
    <scope>NUCLEOTIDE SEQUENCE [LARGE SCALE GENOMIC DNA]</scope>
    <source>
        <strain>JCSC1435</strain>
    </source>
</reference>